<organism>
    <name type="scientific">Equine herpesvirus 1 (strain Ab4p)</name>
    <name type="common">EHV-1</name>
    <name type="synonym">Equine abortion virus</name>
    <dbReference type="NCBI Taxonomy" id="31520"/>
    <lineage>
        <taxon>Viruses</taxon>
        <taxon>Duplodnaviria</taxon>
        <taxon>Heunggongvirae</taxon>
        <taxon>Peploviricota</taxon>
        <taxon>Herviviricetes</taxon>
        <taxon>Herpesvirales</taxon>
        <taxon>Orthoherpesviridae</taxon>
        <taxon>Alphaherpesvirinae</taxon>
        <taxon>Varicellovirus</taxon>
        <taxon>Varicellovirus equidalpha1</taxon>
        <taxon>Equid alphaherpesvirus 1</taxon>
    </lineage>
</organism>
<feature type="chain" id="PRO_0000116148" description="Virion protein US10 homolog">
    <location>
        <begin position="1"/>
        <end position="236"/>
    </location>
</feature>
<feature type="zinc finger region" evidence="2">
    <location>
        <begin position="138"/>
        <end position="150"/>
    </location>
</feature>
<feature type="region of interest" description="Disordered" evidence="3">
    <location>
        <begin position="1"/>
        <end position="32"/>
    </location>
</feature>
<feature type="compositionally biased region" description="Gly residues" evidence="3">
    <location>
        <begin position="21"/>
        <end position="31"/>
    </location>
</feature>
<keyword id="KW-1048">Host nucleus</keyword>
<keyword id="KW-0426">Late protein</keyword>
<keyword id="KW-0479">Metal-binding</keyword>
<keyword id="KW-1185">Reference proteome</keyword>
<keyword id="KW-0946">Virion</keyword>
<keyword id="KW-0920">Virion tegument</keyword>
<keyword id="KW-0862">Zinc</keyword>
<keyword id="KW-0863">Zinc-finger</keyword>
<dbReference type="EMBL" id="AY665713">
    <property type="protein sequence ID" value="AAT67323.1"/>
    <property type="molecule type" value="Genomic_DNA"/>
</dbReference>
<dbReference type="EMBL" id="AY665713">
    <property type="protein sequence ID" value="AAT67335.1"/>
    <property type="molecule type" value="Genomic_DNA"/>
</dbReference>
<dbReference type="PIR" id="C36802">
    <property type="entry name" value="WZBEF8"/>
</dbReference>
<dbReference type="KEGG" id="vg:2948572"/>
<dbReference type="KEGG" id="vg:2948575"/>
<dbReference type="Proteomes" id="UP000001189">
    <property type="component" value="Segment"/>
</dbReference>
<dbReference type="GO" id="GO:0044204">
    <property type="term" value="C:host cell nuclear matrix"/>
    <property type="evidence" value="ECO:0007669"/>
    <property type="project" value="UniProtKB-SubCell"/>
</dbReference>
<dbReference type="GO" id="GO:0019033">
    <property type="term" value="C:viral tegument"/>
    <property type="evidence" value="ECO:0007669"/>
    <property type="project" value="UniProtKB-SubCell"/>
</dbReference>
<dbReference type="GO" id="GO:0008270">
    <property type="term" value="F:zinc ion binding"/>
    <property type="evidence" value="ECO:0007669"/>
    <property type="project" value="UniProtKB-KW"/>
</dbReference>
<dbReference type="InterPro" id="IPR000714">
    <property type="entry name" value="EHV_Unk"/>
</dbReference>
<dbReference type="Pfam" id="PF02053">
    <property type="entry name" value="Gene66"/>
    <property type="match status" value="1"/>
</dbReference>
<dbReference type="PRINTS" id="PR00957">
    <property type="entry name" value="GENE66"/>
</dbReference>
<name>US10_EHV1B</name>
<accession>P28965</accession>
<accession>Q6S6V3</accession>
<organismHost>
    <name type="scientific">Equus caballus</name>
    <name type="common">Horse</name>
    <dbReference type="NCBI Taxonomy" id="9796"/>
</organismHost>
<comment type="subcellular location">
    <subcellularLocation>
        <location evidence="1">Virion tegument</location>
    </subcellularLocation>
    <subcellularLocation>
        <location evidence="1">Host nucleus matrix</location>
    </subcellularLocation>
</comment>
<comment type="induction">
    <text>Expressed late in the infection cycle.</text>
</comment>
<comment type="PTM">
    <text evidence="1">Phosphorylated.</text>
</comment>
<comment type="similarity">
    <text evidence="4">Belongs to the herpesviridae US10 family.</text>
</comment>
<reference key="1">
    <citation type="journal article" date="1992" name="Virology">
        <title>The DNA sequence of equine herpesvirus-1.</title>
        <authorList>
            <person name="Telford E.A.R."/>
            <person name="Watson M.S."/>
            <person name="McBride K."/>
            <person name="Davison A.J."/>
        </authorList>
    </citation>
    <scope>NUCLEOTIDE SEQUENCE [LARGE SCALE GENOMIC DNA]</scope>
</reference>
<reference key="2">
    <citation type="journal article" date="1992" name="Virology">
        <title>Identification and characterization of an equine herpesvirus 1 late gene encoding a potential zinc finger.</title>
        <authorList>
            <person name="Holden V.R."/>
            <person name="Yalamanchili R.R."/>
            <person name="Harty R.N."/>
            <person name="O'Callaghan D.J."/>
        </authorList>
    </citation>
    <scope>LATE PROTEIN</scope>
</reference>
<protein>
    <recommendedName>
        <fullName>Virion protein US10 homolog</fullName>
    </recommendedName>
    <alternativeName>
        <fullName>Gene 66 protein</fullName>
    </alternativeName>
</protein>
<sequence>MDGAYGHVHNGSPMAVDGEESGAGTGTGAGADGLYPTSTDTAAHAVSLPRSVGDFAAVVRAVSAEAADALRSGAGPPAEAWPRVYRMFCDMFGRYAASPMPVFHSADPLRRAVGRYLVDLGAAPVETHAELSGRMLFCAYWCCLGHAFACSRPQMYERACARFFETRLGIGETPPADAERYWAALLNMAGAEPELFPRHAAAAAYLRARGRKLPLQLPSAHRTAKTVAVTGQSINF</sequence>
<proteinExistence type="evidence at transcript level"/>
<evidence type="ECO:0000250" key="1"/>
<evidence type="ECO:0000255" key="2"/>
<evidence type="ECO:0000256" key="3">
    <source>
        <dbReference type="SAM" id="MobiDB-lite"/>
    </source>
</evidence>
<evidence type="ECO:0000305" key="4"/>
<gene>
    <name type="ordered locus">66</name>
</gene>